<keyword id="KW-1003">Cell membrane</keyword>
<keyword id="KW-0472">Membrane</keyword>
<keyword id="KW-0653">Protein transport</keyword>
<keyword id="KW-0811">Translocation</keyword>
<keyword id="KW-0812">Transmembrane</keyword>
<keyword id="KW-1133">Transmembrane helix</keyword>
<keyword id="KW-0813">Transport</keyword>
<reference key="1">
    <citation type="journal article" date="1997" name="Biochim. Biophys. Acta">
        <title>The signal recognition particle receptor alpha subunit of the hyperthermophilic archaeon Acidianus ambivalens exhibits an intrinsic GTP-hydrolyzing activity.</title>
        <authorList>
            <person name="Moll R."/>
            <person name="Schmidtke S."/>
            <person name="Petersen A."/>
            <person name="Schaefer G."/>
        </authorList>
    </citation>
    <scope>NUCLEOTIDE SEQUENCE [GENOMIC DNA]</scope>
    <source>
        <strain>Lei 10 / DSM 3772 / JCM 9191</strain>
    </source>
</reference>
<dbReference type="EMBL" id="X95989">
    <property type="protein sequence ID" value="CAA65234.1"/>
    <property type="molecule type" value="Genomic_DNA"/>
</dbReference>
<dbReference type="PIR" id="T48923">
    <property type="entry name" value="T48923"/>
</dbReference>
<dbReference type="RefSeq" id="WP_152940905.1">
    <property type="nucleotide sequence ID" value="NZ_CP045482.1"/>
</dbReference>
<dbReference type="SMR" id="Q46493"/>
<dbReference type="GeneID" id="42778347"/>
<dbReference type="GO" id="GO:0005886">
    <property type="term" value="C:plasma membrane"/>
    <property type="evidence" value="ECO:0007669"/>
    <property type="project" value="UniProtKB-SubCell"/>
</dbReference>
<dbReference type="GO" id="GO:0008320">
    <property type="term" value="F:protein transmembrane transporter activity"/>
    <property type="evidence" value="ECO:0007669"/>
    <property type="project" value="UniProtKB-UniRule"/>
</dbReference>
<dbReference type="GO" id="GO:0065002">
    <property type="term" value="P:intracellular protein transmembrane transport"/>
    <property type="evidence" value="ECO:0007669"/>
    <property type="project" value="UniProtKB-UniRule"/>
</dbReference>
<dbReference type="GO" id="GO:0009306">
    <property type="term" value="P:protein secretion"/>
    <property type="evidence" value="ECO:0007669"/>
    <property type="project" value="UniProtKB-UniRule"/>
</dbReference>
<dbReference type="GO" id="GO:0006605">
    <property type="term" value="P:protein targeting"/>
    <property type="evidence" value="ECO:0007669"/>
    <property type="project" value="UniProtKB-UniRule"/>
</dbReference>
<dbReference type="Gene3D" id="1.20.5.820">
    <property type="entry name" value="Preprotein translocase SecE subunit"/>
    <property type="match status" value="1"/>
</dbReference>
<dbReference type="HAMAP" id="MF_00422">
    <property type="entry name" value="SecE"/>
    <property type="match status" value="1"/>
</dbReference>
<dbReference type="InterPro" id="IPR023391">
    <property type="entry name" value="Prot_translocase_SecE_dom_sf"/>
</dbReference>
<dbReference type="InterPro" id="IPR008158">
    <property type="entry name" value="Translocase_Sec61-g"/>
</dbReference>
<dbReference type="InterPro" id="IPR001901">
    <property type="entry name" value="Translocase_SecE/Sec61-g"/>
</dbReference>
<dbReference type="NCBIfam" id="NF006906">
    <property type="entry name" value="PRK09400.1-1"/>
    <property type="match status" value="1"/>
</dbReference>
<dbReference type="NCBIfam" id="TIGR00327">
    <property type="entry name" value="secE_euk_arch"/>
    <property type="match status" value="1"/>
</dbReference>
<dbReference type="SUPFAM" id="SSF103456">
    <property type="entry name" value="Preprotein translocase SecE subunit"/>
    <property type="match status" value="1"/>
</dbReference>
<gene>
    <name evidence="1" type="primary">secE</name>
</gene>
<proteinExistence type="inferred from homology"/>
<sequence length="58" mass="6766">MNLLERIKKLPEDWKRIITVAKKPDKDTFSMYLKVTLIVMAFVGLLAYLIQLVLAFII</sequence>
<accession>Q46493</accession>
<evidence type="ECO:0000255" key="1">
    <source>
        <dbReference type="HAMAP-Rule" id="MF_00422"/>
    </source>
</evidence>
<comment type="function">
    <text evidence="1">Essential subunit of the Sec protein translocation channel SecYEG. Clamps together the 2 halves of SecY. May contact the channel plug during translocation.</text>
</comment>
<comment type="subunit">
    <text evidence="1">Component of the Sec protein translocase complex. Heterotrimer consisting of SecY (alpha), SecG (beta) and SecE (gamma) subunits. The heterotrimers can form oligomers, although 1 heterotrimer is thought to be able to translocate proteins. Interacts with the ribosome. May interact with SecDF, and other proteins may be involved.</text>
</comment>
<comment type="subcellular location">
    <subcellularLocation>
        <location evidence="1">Cell membrane</location>
        <topology evidence="1">Single-pass membrane protein</topology>
    </subcellularLocation>
</comment>
<comment type="similarity">
    <text evidence="1">Belongs to the SecE/SEC61-gamma family.</text>
</comment>
<name>SECE_ACIAM</name>
<organism>
    <name type="scientific">Acidianus ambivalens</name>
    <name type="common">Desulfurolobus ambivalens</name>
    <dbReference type="NCBI Taxonomy" id="2283"/>
    <lineage>
        <taxon>Archaea</taxon>
        <taxon>Thermoproteota</taxon>
        <taxon>Thermoprotei</taxon>
        <taxon>Sulfolobales</taxon>
        <taxon>Sulfolobaceae</taxon>
        <taxon>Acidianus</taxon>
    </lineage>
</organism>
<protein>
    <recommendedName>
        <fullName evidence="1">Protein translocase subunit SecE</fullName>
    </recommendedName>
    <alternativeName>
        <fullName evidence="1">Protein transport protein Sec61 gamma subunit homolog</fullName>
    </alternativeName>
</protein>
<feature type="chain" id="PRO_0000104212" description="Protein translocase subunit SecE">
    <location>
        <begin position="1"/>
        <end position="58"/>
    </location>
</feature>
<feature type="transmembrane region" description="Helical" evidence="1">
    <location>
        <begin position="38"/>
        <end position="58"/>
    </location>
</feature>